<organism>
    <name type="scientific">Dunaliella salina</name>
    <name type="common">Green alga</name>
    <name type="synonym">Protococcus salinus</name>
    <dbReference type="NCBI Taxonomy" id="3046"/>
    <lineage>
        <taxon>Eukaryota</taxon>
        <taxon>Viridiplantae</taxon>
        <taxon>Chlorophyta</taxon>
        <taxon>core chlorophytes</taxon>
        <taxon>Chlorophyceae</taxon>
        <taxon>CS clade</taxon>
        <taxon>Chlamydomonadales</taxon>
        <taxon>Dunaliellaceae</taxon>
        <taxon>Dunaliella</taxon>
    </lineage>
</organism>
<accession>P54213</accession>
<feature type="chain" id="PRO_0000073572" description="Caltractin">
    <location>
        <begin position="1"/>
        <end position="169"/>
    </location>
</feature>
<feature type="domain" description="EF-hand 1" evidence="2">
    <location>
        <begin position="25"/>
        <end position="60"/>
    </location>
</feature>
<feature type="domain" description="EF-hand 2" evidence="2">
    <location>
        <begin position="61"/>
        <end position="96"/>
    </location>
</feature>
<feature type="domain" description="EF-hand 3" evidence="2">
    <location>
        <begin position="98"/>
        <end position="133"/>
    </location>
</feature>
<feature type="domain" description="EF-hand 4" evidence="2">
    <location>
        <begin position="134"/>
        <end position="169"/>
    </location>
</feature>
<feature type="region of interest" description="Disordered" evidence="3">
    <location>
        <begin position="1"/>
        <end position="24"/>
    </location>
</feature>
<feature type="binding site" evidence="2">
    <location>
        <position position="38"/>
    </location>
    <ligand>
        <name>Ca(2+)</name>
        <dbReference type="ChEBI" id="CHEBI:29108"/>
        <label>1</label>
    </ligand>
</feature>
<feature type="binding site" evidence="2">
    <location>
        <position position="40"/>
    </location>
    <ligand>
        <name>Ca(2+)</name>
        <dbReference type="ChEBI" id="CHEBI:29108"/>
        <label>1</label>
    </ligand>
</feature>
<feature type="binding site" evidence="2">
    <location>
        <position position="42"/>
    </location>
    <ligand>
        <name>Ca(2+)</name>
        <dbReference type="ChEBI" id="CHEBI:29108"/>
        <label>1</label>
    </ligand>
</feature>
<feature type="binding site" evidence="2">
    <location>
        <position position="44"/>
    </location>
    <ligand>
        <name>Ca(2+)</name>
        <dbReference type="ChEBI" id="CHEBI:29108"/>
        <label>1</label>
    </ligand>
</feature>
<feature type="binding site" evidence="2">
    <location>
        <position position="49"/>
    </location>
    <ligand>
        <name>Ca(2+)</name>
        <dbReference type="ChEBI" id="CHEBI:29108"/>
        <label>1</label>
    </ligand>
</feature>
<feature type="binding site" evidence="2">
    <location>
        <position position="147"/>
    </location>
    <ligand>
        <name>Ca(2+)</name>
        <dbReference type="ChEBI" id="CHEBI:29108"/>
        <label>2</label>
    </ligand>
</feature>
<feature type="binding site" evidence="2">
    <location>
        <position position="149"/>
    </location>
    <ligand>
        <name>Ca(2+)</name>
        <dbReference type="ChEBI" id="CHEBI:29108"/>
        <label>2</label>
    </ligand>
</feature>
<feature type="binding site" evidence="2">
    <location>
        <position position="151"/>
    </location>
    <ligand>
        <name>Ca(2+)</name>
        <dbReference type="ChEBI" id="CHEBI:29108"/>
        <label>2</label>
    </ligand>
</feature>
<feature type="binding site" evidence="2">
    <location>
        <position position="153"/>
    </location>
    <ligand>
        <name>Ca(2+)</name>
        <dbReference type="ChEBI" id="CHEBI:29108"/>
        <label>2</label>
    </ligand>
</feature>
<feature type="binding site" evidence="2">
    <location>
        <position position="158"/>
    </location>
    <ligand>
        <name>Ca(2+)</name>
        <dbReference type="ChEBI" id="CHEBI:29108"/>
        <label>2</label>
    </ligand>
</feature>
<keyword id="KW-0106">Calcium</keyword>
<keyword id="KW-0131">Cell cycle</keyword>
<keyword id="KW-0132">Cell division</keyword>
<keyword id="KW-0479">Metal-binding</keyword>
<keyword id="KW-0498">Mitosis</keyword>
<keyword id="KW-0677">Repeat</keyword>
<reference key="1">
    <citation type="online journal article" date="1996" name="Plant Gene Register">
        <title>Nucleotide sequence of a cDNA encoding a caltractin-like protein from Dunaliella salina.</title>
        <authorList>
            <person name="Ko J.-H."/>
            <person name="Lee S.-H."/>
        </authorList>
        <locator>PGR96-062</locator>
    </citation>
    <scope>NUCLEOTIDE SEQUENCE [MRNA]</scope>
</reference>
<protein>
    <recommendedName>
        <fullName>Caltractin</fullName>
    </recommendedName>
    <alternativeName>
        <fullName>Centrin</fullName>
    </alternativeName>
</protein>
<evidence type="ECO:0000250" key="1"/>
<evidence type="ECO:0000255" key="2">
    <source>
        <dbReference type="PROSITE-ProRule" id="PRU00448"/>
    </source>
</evidence>
<evidence type="ECO:0000256" key="3">
    <source>
        <dbReference type="SAM" id="MobiDB-lite"/>
    </source>
</evidence>
<evidence type="ECO:0000305" key="4"/>
<sequence>MSYRKTVVSARRDQKKGRVGGLTEEQKQEIREAFDLFDTDGSGTIDAKELKVAMRALGFEPKKEEIKKMIADIDKAGSGTIDFEEFLQMMTSKMGERDSREEIIKAFKLFDDDNTGFITLKNLKRVAKELGENLTDEELQEMTDEADRNGDGQIDEDEFYRIMKKTSLF</sequence>
<name>CATR_DUNSA</name>
<proteinExistence type="evidence at transcript level"/>
<dbReference type="EMBL" id="U53812">
    <property type="protein sequence ID" value="AAB67855.1"/>
    <property type="molecule type" value="mRNA"/>
</dbReference>
<dbReference type="PIR" id="T10724">
    <property type="entry name" value="T10724"/>
</dbReference>
<dbReference type="SMR" id="P54213"/>
<dbReference type="GO" id="GO:0016460">
    <property type="term" value="C:myosin II complex"/>
    <property type="evidence" value="ECO:0007669"/>
    <property type="project" value="TreeGrafter"/>
</dbReference>
<dbReference type="GO" id="GO:0005509">
    <property type="term" value="F:calcium ion binding"/>
    <property type="evidence" value="ECO:0007669"/>
    <property type="project" value="InterPro"/>
</dbReference>
<dbReference type="GO" id="GO:0051301">
    <property type="term" value="P:cell division"/>
    <property type="evidence" value="ECO:0007669"/>
    <property type="project" value="UniProtKB-KW"/>
</dbReference>
<dbReference type="CDD" id="cd00051">
    <property type="entry name" value="EFh"/>
    <property type="match status" value="2"/>
</dbReference>
<dbReference type="FunFam" id="1.10.238.10:FF:000077">
    <property type="entry name" value="Centrin 1"/>
    <property type="match status" value="1"/>
</dbReference>
<dbReference type="FunFam" id="1.10.238.10:FF:000070">
    <property type="entry name" value="Centrin-1"/>
    <property type="match status" value="1"/>
</dbReference>
<dbReference type="Gene3D" id="1.10.238.10">
    <property type="entry name" value="EF-hand"/>
    <property type="match status" value="2"/>
</dbReference>
<dbReference type="InterPro" id="IPR050230">
    <property type="entry name" value="CALM/Myosin/TropC-like"/>
</dbReference>
<dbReference type="InterPro" id="IPR011992">
    <property type="entry name" value="EF-hand-dom_pair"/>
</dbReference>
<dbReference type="InterPro" id="IPR018247">
    <property type="entry name" value="EF_Hand_1_Ca_BS"/>
</dbReference>
<dbReference type="InterPro" id="IPR002048">
    <property type="entry name" value="EF_hand_dom"/>
</dbReference>
<dbReference type="PANTHER" id="PTHR23048:SF59">
    <property type="entry name" value="EF-HAND SUPERFAMILY PROTEIN"/>
    <property type="match status" value="1"/>
</dbReference>
<dbReference type="PANTHER" id="PTHR23048">
    <property type="entry name" value="MYOSIN LIGHT CHAIN 1, 3"/>
    <property type="match status" value="1"/>
</dbReference>
<dbReference type="Pfam" id="PF13499">
    <property type="entry name" value="EF-hand_7"/>
    <property type="match status" value="2"/>
</dbReference>
<dbReference type="SMART" id="SM00054">
    <property type="entry name" value="EFh"/>
    <property type="match status" value="4"/>
</dbReference>
<dbReference type="SUPFAM" id="SSF47473">
    <property type="entry name" value="EF-hand"/>
    <property type="match status" value="1"/>
</dbReference>
<dbReference type="PROSITE" id="PS00018">
    <property type="entry name" value="EF_HAND_1"/>
    <property type="match status" value="2"/>
</dbReference>
<dbReference type="PROSITE" id="PS50222">
    <property type="entry name" value="EF_HAND_2"/>
    <property type="match status" value="4"/>
</dbReference>
<comment type="function">
    <text evidence="1">This calcium-binding protein is found in the basal body complexes (the functional homolog of the centrosome in animal cell). In mitotic cells it is specifically associated with the poles of the mitotic spindles at the sites of the duplicated basal body complexes (By similarity).</text>
</comment>
<comment type="similarity">
    <text evidence="4">Belongs to the centrin family.</text>
</comment>